<gene>
    <name type="primary">CRH</name>
</gene>
<protein>
    <recommendedName>
        <fullName>Corticoliberin</fullName>
    </recommendedName>
    <alternativeName>
        <fullName>Corticotropin-releasing factor</fullName>
        <shortName>CRF</shortName>
    </alternativeName>
    <alternativeName>
        <fullName>Corticotropin-releasing hormone</fullName>
    </alternativeName>
    <alternativeName>
        <fullName>Endorpholiberin</fullName>
    </alternativeName>
</protein>
<evidence type="ECO:0000250" key="1">
    <source>
        <dbReference type="UniProtKB" id="P06850"/>
    </source>
</evidence>
<evidence type="ECO:0000250" key="2">
    <source>
        <dbReference type="UniProtKB" id="Q8CIT0"/>
    </source>
</evidence>
<evidence type="ECO:0000256" key="3">
    <source>
        <dbReference type="SAM" id="MobiDB-lite"/>
    </source>
</evidence>
<evidence type="ECO:0000269" key="4">
    <source>
    </source>
</evidence>
<evidence type="ECO:0000269" key="5">
    <source>
    </source>
</evidence>
<evidence type="ECO:0000269" key="6">
    <source>
    </source>
</evidence>
<evidence type="ECO:0000269" key="7">
    <source>
    </source>
</evidence>
<evidence type="ECO:0000305" key="8"/>
<reference key="1">
    <citation type="journal article" date="1983" name="Nature">
        <title>Cloning and sequence analysis of cDNA for ovine corticotropin-releasing factor precursor.</title>
        <authorList>
            <person name="Furutani Y."/>
            <person name="Morimoto Y."/>
            <person name="Shibahara S."/>
            <person name="Noda M."/>
            <person name="Takahashi H."/>
            <person name="Hirose T."/>
            <person name="Asai M."/>
            <person name="Inayama S."/>
            <person name="Hayashida H."/>
            <person name="Miyata T."/>
            <person name="Numa S."/>
        </authorList>
    </citation>
    <scope>NUCLEOTIDE SEQUENCE [MRNA]</scope>
</reference>
<reference key="2">
    <citation type="journal article" date="1988" name="Gene">
        <title>Nucleotide sequence of the gene coding for ovine corticotropin-releasing factor and regulation of its mRNA levels by glucocorticoids.</title>
        <authorList>
            <person name="Roche P.J."/>
            <person name="Crawford R.J."/>
            <person name="Fernley R.T."/>
            <person name="Tregear G.W."/>
            <person name="Coghlan J.P."/>
        </authorList>
    </citation>
    <scope>NUCLEOTIDE SEQUENCE [GENOMIC DNA]</scope>
    <scope>TISSUE SPECIFICITY</scope>
</reference>
<reference key="3">
    <citation type="journal article" date="1981" name="Proc. Natl. Acad. Sci. U.S.A.">
        <title>Primary structure of corticotropin-releasing factor from ovine hypothalamus.</title>
        <authorList>
            <person name="Spiess J."/>
            <person name="Rivier J."/>
            <person name="Rivier C."/>
            <person name="Vale W."/>
        </authorList>
    </citation>
    <scope>PROTEIN SEQUENCE OF 148-188</scope>
    <scope>FUNCTION</scope>
    <scope>AMIDATION AT ALA-188</scope>
    <scope>SUBCELLULAR LOCATION</scope>
</reference>
<reference key="4">
    <citation type="journal article" date="1981" name="Science">
        <title>Characterization of a 41-residue ovine hypothalamic peptide that stimulates secretion of corticotropin and beta-endorphin.</title>
        <authorList>
            <person name="Vale W."/>
            <person name="Spiess J."/>
            <person name="Rivier C."/>
            <person name="Rivier J."/>
        </authorList>
    </citation>
    <scope>PROTEIN SEQUENCE OF 148-188</scope>
    <scope>SYNTHESIS OF 148-188</scope>
    <scope>FUNCTION</scope>
</reference>
<reference key="5">
    <citation type="journal article" date="1989" name="Biochim. Biophys. Acta">
        <title>Structural characterization and localization of corticotropin-releasing factor in testis.</title>
        <authorList>
            <person name="Audhya T."/>
            <person name="Hollander C.S."/>
            <person name="Schlesinger D.H."/>
            <person name="Hutchinson B."/>
        </authorList>
    </citation>
    <scope>PROTEIN SEQUENCE OF 148-188</scope>
</reference>
<proteinExistence type="evidence at protein level"/>
<name>CRF_SHEEP</name>
<keyword id="KW-0027">Amidation</keyword>
<keyword id="KW-0165">Cleavage on pair of basic residues</keyword>
<keyword id="KW-0903">Direct protein sequencing</keyword>
<keyword id="KW-0372">Hormone</keyword>
<keyword id="KW-1185">Reference proteome</keyword>
<keyword id="KW-0964">Secreted</keyword>
<keyword id="KW-0732">Signal</keyword>
<feature type="signal peptide" evidence="8">
    <location>
        <begin position="1"/>
        <end position="24"/>
    </location>
</feature>
<feature type="propeptide" id="PRO_0000006220" evidence="4 6 7">
    <location>
        <begin position="25"/>
        <end position="147"/>
    </location>
</feature>
<feature type="peptide" id="PRO_0000006221" description="Corticoliberin" evidence="7">
    <location>
        <begin position="148"/>
        <end position="188"/>
    </location>
</feature>
<feature type="region of interest" description="Disordered" evidence="3">
    <location>
        <begin position="33"/>
        <end position="53"/>
    </location>
</feature>
<feature type="region of interest" description="Disordered" evidence="3">
    <location>
        <begin position="115"/>
        <end position="151"/>
    </location>
</feature>
<feature type="compositionally biased region" description="Low complexity" evidence="3">
    <location>
        <begin position="41"/>
        <end position="53"/>
    </location>
</feature>
<feature type="modified residue" description="Alanine amide" evidence="7">
    <location>
        <position position="188"/>
    </location>
</feature>
<feature type="sequence conflict" description="In Ref. 2; AAA31513." evidence="8" ref="2">
    <original>K</original>
    <variation>E</variation>
    <location>
        <position position="127"/>
    </location>
</feature>
<organism>
    <name type="scientific">Ovis aries</name>
    <name type="common">Sheep</name>
    <dbReference type="NCBI Taxonomy" id="9940"/>
    <lineage>
        <taxon>Eukaryota</taxon>
        <taxon>Metazoa</taxon>
        <taxon>Chordata</taxon>
        <taxon>Craniata</taxon>
        <taxon>Vertebrata</taxon>
        <taxon>Euteleostomi</taxon>
        <taxon>Mammalia</taxon>
        <taxon>Eutheria</taxon>
        <taxon>Laurasiatheria</taxon>
        <taxon>Artiodactyla</taxon>
        <taxon>Ruminantia</taxon>
        <taxon>Pecora</taxon>
        <taxon>Bovidae</taxon>
        <taxon>Caprinae</taxon>
        <taxon>Ovis</taxon>
    </lineage>
</organism>
<sequence length="190" mass="20672">MRLPLLVSVGVLLVALLPSPPCRALLSRGPIPGARQASQHPQPLSFFQPLPQPQEPQALPTLLRVGEEYFLRLGNLDETRAAPLSPAASPLASRSSSRLSPDKVAANFFRALLQPRRPLDSPAGPAKRGTENALGSRQEAPAARKRRSQEPPISLDLTFHLLREVLEMTKADQLAQQAHSNRKLLDIAGK</sequence>
<dbReference type="EMBL" id="J00803">
    <property type="protein sequence ID" value="AAA31512.1"/>
    <property type="molecule type" value="mRNA"/>
</dbReference>
<dbReference type="EMBL" id="M22853">
    <property type="protein sequence ID" value="AAA31513.1"/>
    <property type="molecule type" value="Genomic_DNA"/>
</dbReference>
<dbReference type="PIR" id="JS0030">
    <property type="entry name" value="RHSHCE"/>
</dbReference>
<dbReference type="STRING" id="9940.ENSOARP00000018668"/>
<dbReference type="PaxDb" id="9940-ENSOARP00000018668"/>
<dbReference type="Ensembl" id="ENSOART00215030205">
    <property type="protein sequence ID" value="ENSOARP00215015878"/>
    <property type="gene ID" value="ENSOARG00215018003"/>
</dbReference>
<dbReference type="Ensembl" id="ENSOART00260023666">
    <property type="protein sequence ID" value="ENSOARP00260011879"/>
    <property type="gene ID" value="ENSOARG00260014625"/>
</dbReference>
<dbReference type="eggNOG" id="ENOG502S25G">
    <property type="taxonomic scope" value="Eukaryota"/>
</dbReference>
<dbReference type="Proteomes" id="UP000002356">
    <property type="component" value="Unplaced"/>
</dbReference>
<dbReference type="GO" id="GO:0005615">
    <property type="term" value="C:extracellular space"/>
    <property type="evidence" value="ECO:0007669"/>
    <property type="project" value="TreeGrafter"/>
</dbReference>
<dbReference type="GO" id="GO:0045202">
    <property type="term" value="C:synapse"/>
    <property type="evidence" value="ECO:0007669"/>
    <property type="project" value="GOC"/>
</dbReference>
<dbReference type="GO" id="GO:0017045">
    <property type="term" value="F:corticotropin-releasing hormone activity"/>
    <property type="evidence" value="ECO:0007669"/>
    <property type="project" value="TreeGrafter"/>
</dbReference>
<dbReference type="GO" id="GO:0032811">
    <property type="term" value="P:negative regulation of epinephrine secretion"/>
    <property type="evidence" value="ECO:0007669"/>
    <property type="project" value="TreeGrafter"/>
</dbReference>
<dbReference type="GO" id="GO:0070093">
    <property type="term" value="P:negative regulation of glucagon secretion"/>
    <property type="evidence" value="ECO:0007669"/>
    <property type="project" value="TreeGrafter"/>
</dbReference>
<dbReference type="GO" id="GO:0051464">
    <property type="term" value="P:positive regulation of cortisol secretion"/>
    <property type="evidence" value="ECO:0007669"/>
    <property type="project" value="TreeGrafter"/>
</dbReference>
<dbReference type="GO" id="GO:2000310">
    <property type="term" value="P:regulation of NMDA receptor activity"/>
    <property type="evidence" value="ECO:0000314"/>
    <property type="project" value="UniProtKB"/>
</dbReference>
<dbReference type="GO" id="GO:0001963">
    <property type="term" value="P:synaptic transmission, dopaminergic"/>
    <property type="evidence" value="ECO:0000314"/>
    <property type="project" value="UniProtKB"/>
</dbReference>
<dbReference type="Gene3D" id="6.10.250.1920">
    <property type="match status" value="1"/>
</dbReference>
<dbReference type="InterPro" id="IPR018446">
    <property type="entry name" value="Corticotropin-releasing_fac_CS"/>
</dbReference>
<dbReference type="InterPro" id="IPR000187">
    <property type="entry name" value="CRF"/>
</dbReference>
<dbReference type="InterPro" id="IPR003620">
    <property type="entry name" value="Urocortin_CRF"/>
</dbReference>
<dbReference type="PANTHER" id="PTHR15035:SF9">
    <property type="entry name" value="CORTICOLIBERIN"/>
    <property type="match status" value="1"/>
</dbReference>
<dbReference type="PANTHER" id="PTHR15035">
    <property type="entry name" value="CORTICOLIBERIN/UROCORTIN"/>
    <property type="match status" value="1"/>
</dbReference>
<dbReference type="Pfam" id="PF00473">
    <property type="entry name" value="CRF"/>
    <property type="match status" value="1"/>
</dbReference>
<dbReference type="PRINTS" id="PR01612">
    <property type="entry name" value="CRFFAMILY"/>
</dbReference>
<dbReference type="SMART" id="SM00039">
    <property type="entry name" value="CRF"/>
    <property type="match status" value="1"/>
</dbReference>
<dbReference type="PROSITE" id="PS00511">
    <property type="entry name" value="CRF"/>
    <property type="match status" value="1"/>
</dbReference>
<accession>P01142</accession>
<comment type="function">
    <text evidence="2 6 7">Hormone regulating the release of corticotropin from pituitary gland (PubMed:6267699, PubMed:6273874). Induces NLRP6 in intestinal epithelial cells, hence may influence gut microbiota profile (By similarity).</text>
</comment>
<comment type="subunit">
    <text evidence="1">Interacts (via C-terminus) with CRFR1 (via N-terminal extracellular domain).</text>
</comment>
<comment type="subcellular location">
    <subcellularLocation>
        <location evidence="7">Secreted</location>
    </subcellularLocation>
</comment>
<comment type="tissue specificity">
    <text evidence="5">Produced by the hypothalamus.</text>
</comment>
<comment type="similarity">
    <text evidence="8">Belongs to the sauvagine/corticotropin-releasing factor/urotensin I family.</text>
</comment>